<name>SAR1_CRYNB</name>
<feature type="chain" id="PRO_0000410277" description="Small COPII coat GTPase SAR1">
    <location>
        <begin position="1"/>
        <end position="189"/>
    </location>
</feature>
<feature type="binding site" evidence="1">
    <location>
        <begin position="27"/>
        <end position="34"/>
    </location>
    <ligand>
        <name>GTP</name>
        <dbReference type="ChEBI" id="CHEBI:37565"/>
    </ligand>
</feature>
<feature type="binding site" evidence="1">
    <location>
        <begin position="70"/>
        <end position="73"/>
    </location>
    <ligand>
        <name>GTP</name>
        <dbReference type="ChEBI" id="CHEBI:37565"/>
    </ligand>
</feature>
<feature type="binding site" evidence="1">
    <location>
        <begin position="129"/>
        <end position="132"/>
    </location>
    <ligand>
        <name>GTP</name>
        <dbReference type="ChEBI" id="CHEBI:37565"/>
    </ligand>
</feature>
<organism>
    <name type="scientific">Cryptococcus neoformans var. neoformans serotype D (strain B-3501A)</name>
    <name type="common">Filobasidiella neoformans</name>
    <dbReference type="NCBI Taxonomy" id="283643"/>
    <lineage>
        <taxon>Eukaryota</taxon>
        <taxon>Fungi</taxon>
        <taxon>Dikarya</taxon>
        <taxon>Basidiomycota</taxon>
        <taxon>Agaricomycotina</taxon>
        <taxon>Tremellomycetes</taxon>
        <taxon>Tremellales</taxon>
        <taxon>Cryptococcaceae</taxon>
        <taxon>Cryptococcus</taxon>
        <taxon>Cryptococcus neoformans species complex</taxon>
    </lineage>
</organism>
<proteinExistence type="inferred from homology"/>
<accession>P0CR31</accession>
<accession>Q55XY7</accession>
<accession>Q5KM05</accession>
<evidence type="ECO:0000250" key="1"/>
<evidence type="ECO:0000305" key="2"/>
<dbReference type="EC" id="3.6.5.-"/>
<dbReference type="EMBL" id="AAEY01000007">
    <property type="protein sequence ID" value="EAL22779.1"/>
    <property type="molecule type" value="Genomic_DNA"/>
</dbReference>
<dbReference type="RefSeq" id="XP_777426.1">
    <property type="nucleotide sequence ID" value="XM_772333.1"/>
</dbReference>
<dbReference type="SMR" id="P0CR31"/>
<dbReference type="EnsemblFungi" id="AAW41610">
    <property type="protein sequence ID" value="AAW41610"/>
    <property type="gene ID" value="CNB03430"/>
</dbReference>
<dbReference type="GeneID" id="4934319"/>
<dbReference type="KEGG" id="cnb:CNBB2270"/>
<dbReference type="VEuPathDB" id="FungiDB:CNBB2270"/>
<dbReference type="HOGENOM" id="CLU_040729_6_0_1"/>
<dbReference type="GO" id="GO:0005789">
    <property type="term" value="C:endoplasmic reticulum membrane"/>
    <property type="evidence" value="ECO:0007669"/>
    <property type="project" value="UniProtKB-SubCell"/>
</dbReference>
<dbReference type="GO" id="GO:0012507">
    <property type="term" value="C:ER to Golgi transport vesicle membrane"/>
    <property type="evidence" value="ECO:0007669"/>
    <property type="project" value="UniProtKB-SubCell"/>
</dbReference>
<dbReference type="GO" id="GO:0000139">
    <property type="term" value="C:Golgi membrane"/>
    <property type="evidence" value="ECO:0007669"/>
    <property type="project" value="UniProtKB-SubCell"/>
</dbReference>
<dbReference type="GO" id="GO:0005525">
    <property type="term" value="F:GTP binding"/>
    <property type="evidence" value="ECO:0007669"/>
    <property type="project" value="UniProtKB-KW"/>
</dbReference>
<dbReference type="GO" id="GO:0003924">
    <property type="term" value="F:GTPase activity"/>
    <property type="evidence" value="ECO:0007669"/>
    <property type="project" value="InterPro"/>
</dbReference>
<dbReference type="GO" id="GO:0006886">
    <property type="term" value="P:intracellular protein transport"/>
    <property type="evidence" value="ECO:0007669"/>
    <property type="project" value="InterPro"/>
</dbReference>
<dbReference type="GO" id="GO:0016192">
    <property type="term" value="P:vesicle-mediated transport"/>
    <property type="evidence" value="ECO:0007669"/>
    <property type="project" value="UniProtKB-KW"/>
</dbReference>
<dbReference type="CDD" id="cd00879">
    <property type="entry name" value="Sar1"/>
    <property type="match status" value="1"/>
</dbReference>
<dbReference type="FunFam" id="3.40.50.300:FF:000161">
    <property type="entry name" value="Small COPII coat GTPase"/>
    <property type="match status" value="1"/>
</dbReference>
<dbReference type="Gene3D" id="3.40.50.300">
    <property type="entry name" value="P-loop containing nucleotide triphosphate hydrolases"/>
    <property type="match status" value="1"/>
</dbReference>
<dbReference type="InterPro" id="IPR027417">
    <property type="entry name" value="P-loop_NTPase"/>
</dbReference>
<dbReference type="InterPro" id="IPR005225">
    <property type="entry name" value="Small_GTP-bd"/>
</dbReference>
<dbReference type="InterPro" id="IPR006689">
    <property type="entry name" value="Small_GTPase_ARF/SAR"/>
</dbReference>
<dbReference type="InterPro" id="IPR006687">
    <property type="entry name" value="Small_GTPase_SAR1"/>
</dbReference>
<dbReference type="NCBIfam" id="TIGR00231">
    <property type="entry name" value="small_GTP"/>
    <property type="match status" value="1"/>
</dbReference>
<dbReference type="PANTHER" id="PTHR45684">
    <property type="entry name" value="RE74312P"/>
    <property type="match status" value="1"/>
</dbReference>
<dbReference type="Pfam" id="PF00025">
    <property type="entry name" value="Arf"/>
    <property type="match status" value="1"/>
</dbReference>
<dbReference type="PRINTS" id="PR00328">
    <property type="entry name" value="SAR1GTPBP"/>
</dbReference>
<dbReference type="SMART" id="SM00177">
    <property type="entry name" value="ARF"/>
    <property type="match status" value="1"/>
</dbReference>
<dbReference type="SMART" id="SM00178">
    <property type="entry name" value="SAR"/>
    <property type="match status" value="1"/>
</dbReference>
<dbReference type="SUPFAM" id="SSF52540">
    <property type="entry name" value="P-loop containing nucleoside triphosphate hydrolases"/>
    <property type="match status" value="1"/>
</dbReference>
<dbReference type="PROSITE" id="PS51422">
    <property type="entry name" value="SAR1"/>
    <property type="match status" value="1"/>
</dbReference>
<comment type="function">
    <text evidence="1">Small GTPase component of the coat protein complex II (COPII) which promotes the formation of transport vesicles from the endoplasmic reticulum (ER). The coat has two main functions, the physical deformation of the endoplasmic reticulum membrane into vesicles and the selection of cargo molecules. SAR1 controls the coat assembly in a stepwise manner. Activated SAR1-GTP binds to membranes first and recruits the SEC23/24 complex. These SEC23/24-SAR1 prebudding intermediates are then collected by the SEC13/31 complex as subunits polymerize to form coated transport vesicles. Conversion to SAR1-GDP triggers coat release and recycles COPII subunits (By similarity).</text>
</comment>
<comment type="catalytic activity">
    <reaction>
        <text>GTP + H2O = GDP + phosphate + H(+)</text>
        <dbReference type="Rhea" id="RHEA:19669"/>
        <dbReference type="ChEBI" id="CHEBI:15377"/>
        <dbReference type="ChEBI" id="CHEBI:15378"/>
        <dbReference type="ChEBI" id="CHEBI:37565"/>
        <dbReference type="ChEBI" id="CHEBI:43474"/>
        <dbReference type="ChEBI" id="CHEBI:58189"/>
    </reaction>
</comment>
<comment type="subunit">
    <text evidence="1">COPII is composed of at least 5 proteins: the SEC23/24 complex, the SEC13/31 complex and SAR1.</text>
</comment>
<comment type="subcellular location">
    <subcellularLocation>
        <location evidence="1">Cytoplasmic vesicle</location>
        <location evidence="1">COPII-coated vesicle membrane</location>
        <topology evidence="1">Peripheral membrane protein</topology>
        <orientation evidence="1">Cytoplasmic side</orientation>
    </subcellularLocation>
    <subcellularLocation>
        <location evidence="1">Endoplasmic reticulum membrane</location>
        <topology evidence="1">Peripheral membrane protein</topology>
        <orientation evidence="1">Cytoplasmic side</orientation>
    </subcellularLocation>
    <subcellularLocation>
        <location evidence="1">Golgi apparatus membrane</location>
        <topology evidence="1">Peripheral membrane protein</topology>
        <orientation evidence="1">Cytoplasmic side</orientation>
    </subcellularLocation>
</comment>
<comment type="similarity">
    <text evidence="2">Belongs to the small GTPase superfamily. SAR1 family.</text>
</comment>
<reference key="1">
    <citation type="journal article" date="2005" name="Science">
        <title>The genome of the basidiomycetous yeast and human pathogen Cryptococcus neoformans.</title>
        <authorList>
            <person name="Loftus B.J."/>
            <person name="Fung E."/>
            <person name="Roncaglia P."/>
            <person name="Rowley D."/>
            <person name="Amedeo P."/>
            <person name="Bruno D."/>
            <person name="Vamathevan J."/>
            <person name="Miranda M."/>
            <person name="Anderson I.J."/>
            <person name="Fraser J.A."/>
            <person name="Allen J.E."/>
            <person name="Bosdet I.E."/>
            <person name="Brent M.R."/>
            <person name="Chiu R."/>
            <person name="Doering T.L."/>
            <person name="Donlin M.J."/>
            <person name="D'Souza C.A."/>
            <person name="Fox D.S."/>
            <person name="Grinberg V."/>
            <person name="Fu J."/>
            <person name="Fukushima M."/>
            <person name="Haas B.J."/>
            <person name="Huang J.C."/>
            <person name="Janbon G."/>
            <person name="Jones S.J.M."/>
            <person name="Koo H.L."/>
            <person name="Krzywinski M.I."/>
            <person name="Kwon-Chung K.J."/>
            <person name="Lengeler K.B."/>
            <person name="Maiti R."/>
            <person name="Marra M.A."/>
            <person name="Marra R.E."/>
            <person name="Mathewson C.A."/>
            <person name="Mitchell T.G."/>
            <person name="Pertea M."/>
            <person name="Riggs F.R."/>
            <person name="Salzberg S.L."/>
            <person name="Schein J.E."/>
            <person name="Shvartsbeyn A."/>
            <person name="Shin H."/>
            <person name="Shumway M."/>
            <person name="Specht C.A."/>
            <person name="Suh B.B."/>
            <person name="Tenney A."/>
            <person name="Utterback T.R."/>
            <person name="Wickes B.L."/>
            <person name="Wortman J.R."/>
            <person name="Wye N.H."/>
            <person name="Kronstad J.W."/>
            <person name="Lodge J.K."/>
            <person name="Heitman J."/>
            <person name="Davis R.W."/>
            <person name="Fraser C.M."/>
            <person name="Hyman R.W."/>
        </authorList>
    </citation>
    <scope>NUCLEOTIDE SEQUENCE [LARGE SCALE GENOMIC DNA]</scope>
    <source>
        <strain>B-3501A</strain>
    </source>
</reference>
<gene>
    <name type="primary">SAR1</name>
    <name type="ordered locus">CNBB2270</name>
</gene>
<sequence length="189" mass="21382">MFIINWFWDVLASLGLMNKSAKLLFLGLDNAGKTTLLHMLKNDRLATLQPTLHPTSEELAIGNVKFTTYDLGGHIQARRLWRDYFPEVDGIVFLVDSADAERFAESKAELDSLLSIESLAQVPFLILGNKIDAYGAVSEEQLRHELGLYQTTGKGKIPLRDIRPIEVFMCSVVMRQGYGEGFRWLSQYI</sequence>
<keyword id="KW-0968">Cytoplasmic vesicle</keyword>
<keyword id="KW-0256">Endoplasmic reticulum</keyword>
<keyword id="KW-0931">ER-Golgi transport</keyword>
<keyword id="KW-0333">Golgi apparatus</keyword>
<keyword id="KW-0342">GTP-binding</keyword>
<keyword id="KW-0378">Hydrolase</keyword>
<keyword id="KW-0472">Membrane</keyword>
<keyword id="KW-0547">Nucleotide-binding</keyword>
<keyword id="KW-0653">Protein transport</keyword>
<keyword id="KW-0813">Transport</keyword>
<protein>
    <recommendedName>
        <fullName>Small COPII coat GTPase SAR1</fullName>
        <ecNumber>3.6.5.-</ecNumber>
    </recommendedName>
</protein>